<evidence type="ECO:0000250" key="1"/>
<evidence type="ECO:0000255" key="2"/>
<evidence type="ECO:0000305" key="3"/>
<feature type="chain" id="PRO_0000372251" description="Putative antiporter subunit mnhC2">
    <location>
        <begin position="1"/>
        <end position="114"/>
    </location>
</feature>
<feature type="transmembrane region" description="Helical" evidence="2">
    <location>
        <begin position="3"/>
        <end position="23"/>
    </location>
</feature>
<feature type="transmembrane region" description="Helical" evidence="2">
    <location>
        <begin position="28"/>
        <end position="48"/>
    </location>
</feature>
<feature type="transmembrane region" description="Helical" evidence="2">
    <location>
        <begin position="72"/>
        <end position="92"/>
    </location>
</feature>
<proteinExistence type="inferred from homology"/>
<dbReference type="EMBL" id="CP000703">
    <property type="protein sequence ID" value="ABQ48450.1"/>
    <property type="molecule type" value="Genomic_DNA"/>
</dbReference>
<dbReference type="RefSeq" id="WP_001048985.1">
    <property type="nucleotide sequence ID" value="NC_009487.1"/>
</dbReference>
<dbReference type="SMR" id="A5IQH7"/>
<dbReference type="KEGG" id="saj:SaurJH9_0647"/>
<dbReference type="HOGENOM" id="CLU_082058_3_1_9"/>
<dbReference type="GO" id="GO:0005886">
    <property type="term" value="C:plasma membrane"/>
    <property type="evidence" value="ECO:0007669"/>
    <property type="project" value="UniProtKB-SubCell"/>
</dbReference>
<dbReference type="GO" id="GO:0015297">
    <property type="term" value="F:antiporter activity"/>
    <property type="evidence" value="ECO:0007669"/>
    <property type="project" value="UniProtKB-KW"/>
</dbReference>
<dbReference type="GO" id="GO:0006811">
    <property type="term" value="P:monoatomic ion transport"/>
    <property type="evidence" value="ECO:0007669"/>
    <property type="project" value="UniProtKB-KW"/>
</dbReference>
<dbReference type="Gene3D" id="1.10.287.3510">
    <property type="match status" value="1"/>
</dbReference>
<dbReference type="InterPro" id="IPR050601">
    <property type="entry name" value="CPA3_antiporter_subunitC"/>
</dbReference>
<dbReference type="InterPro" id="IPR039428">
    <property type="entry name" value="NUOK/Mnh_C1-like"/>
</dbReference>
<dbReference type="NCBIfam" id="NF009303">
    <property type="entry name" value="PRK12660.1"/>
    <property type="match status" value="1"/>
</dbReference>
<dbReference type="PANTHER" id="PTHR34583">
    <property type="entry name" value="ANTIPORTER SUBUNIT MNHC2-RELATED"/>
    <property type="match status" value="1"/>
</dbReference>
<dbReference type="PANTHER" id="PTHR34583:SF2">
    <property type="entry name" value="ANTIPORTER SUBUNIT MNHC2-RELATED"/>
    <property type="match status" value="1"/>
</dbReference>
<dbReference type="Pfam" id="PF00420">
    <property type="entry name" value="Oxidored_q2"/>
    <property type="match status" value="1"/>
</dbReference>
<accession>A5IQH7</accession>
<gene>
    <name type="primary">mnhC2</name>
    <name type="synonym">mrpC2</name>
    <name type="ordered locus">SaurJH9_0647</name>
</gene>
<comment type="subunit">
    <text evidence="1">May form a heterooligomeric complex that consists of seven subunits: mnhA2, mnhB2, mnhC2, mnhD2, mnhE2, mnhF2 and mnhG2.</text>
</comment>
<comment type="subcellular location">
    <subcellularLocation>
        <location evidence="3">Cell membrane</location>
        <topology evidence="3">Multi-pass membrane protein</topology>
    </subcellularLocation>
</comment>
<comment type="similarity">
    <text evidence="3">Belongs to the CPA3 antiporters (TC 2.A.63) subunit C family.</text>
</comment>
<keyword id="KW-0050">Antiport</keyword>
<keyword id="KW-1003">Cell membrane</keyword>
<keyword id="KW-0406">Ion transport</keyword>
<keyword id="KW-0472">Membrane</keyword>
<keyword id="KW-0812">Transmembrane</keyword>
<keyword id="KW-1133">Transmembrane helix</keyword>
<keyword id="KW-0813">Transport</keyword>
<reference key="1">
    <citation type="submission" date="2007-05" db="EMBL/GenBank/DDBJ databases">
        <title>Complete sequence of chromosome of Staphylococcus aureus subsp. aureus JH9.</title>
        <authorList>
            <consortium name="US DOE Joint Genome Institute"/>
            <person name="Copeland A."/>
            <person name="Lucas S."/>
            <person name="Lapidus A."/>
            <person name="Barry K."/>
            <person name="Detter J.C."/>
            <person name="Glavina del Rio T."/>
            <person name="Hammon N."/>
            <person name="Israni S."/>
            <person name="Pitluck S."/>
            <person name="Chain P."/>
            <person name="Malfatti S."/>
            <person name="Shin M."/>
            <person name="Vergez L."/>
            <person name="Schmutz J."/>
            <person name="Larimer F."/>
            <person name="Land M."/>
            <person name="Hauser L."/>
            <person name="Kyrpides N."/>
            <person name="Kim E."/>
            <person name="Tomasz A."/>
            <person name="Richardson P."/>
        </authorList>
    </citation>
    <scope>NUCLEOTIDE SEQUENCE [LARGE SCALE GENOMIC DNA]</scope>
    <source>
        <strain>JH9</strain>
    </source>
</reference>
<name>MNHC2_STAA9</name>
<sequence>MNLILLLVIGFLVFIGTYMILSINLIRIVIGISIYTHAGNLIIMSMGTYGSSRSEPLITGGNQLFVDPLLQAIVLTAIVIGFGMTAFLLVLVYRTYKVTKEDEIEGLRGEDDAK</sequence>
<protein>
    <recommendedName>
        <fullName>Putative antiporter subunit mnhC2</fullName>
    </recommendedName>
    <alternativeName>
        <fullName>Mrp complex subunit C2</fullName>
    </alternativeName>
    <alternativeName>
        <fullName>Putative NADH-ubiquinone oxidoreductase subunit mnhC2</fullName>
    </alternativeName>
</protein>
<organism>
    <name type="scientific">Staphylococcus aureus (strain JH9)</name>
    <dbReference type="NCBI Taxonomy" id="359786"/>
    <lineage>
        <taxon>Bacteria</taxon>
        <taxon>Bacillati</taxon>
        <taxon>Bacillota</taxon>
        <taxon>Bacilli</taxon>
        <taxon>Bacillales</taxon>
        <taxon>Staphylococcaceae</taxon>
        <taxon>Staphylococcus</taxon>
    </lineage>
</organism>